<name>HSP41_PEA</name>
<sequence>MSLKPLNMLLVPFLLLILAADFPLKAKASLLPFIDSPNTLLSDLWSDRFPDPFRVLEQIPYGVEKHEPSITLSHARVDWKETPEGHVIMVDVPGLKKDDIKIEVEENRVLRVSGERKKEEDKKGDHWHRVERSYGKFWRQFKLPQNVDLDSVKAKMENGVLTLTLHKLSHDKIKGPRMVSIVEEDDKPSKIVNDELK</sequence>
<dbReference type="EMBL" id="M33898">
    <property type="protein sequence ID" value="AAA33673.1"/>
    <property type="molecule type" value="mRNA"/>
</dbReference>
<dbReference type="PIR" id="A48113">
    <property type="entry name" value="A48113"/>
</dbReference>
<dbReference type="SMR" id="P19244"/>
<dbReference type="GO" id="GO:0005788">
    <property type="term" value="C:endoplasmic reticulum lumen"/>
    <property type="evidence" value="ECO:0007669"/>
    <property type="project" value="UniProtKB-SubCell"/>
</dbReference>
<dbReference type="GO" id="GO:0006950">
    <property type="term" value="P:response to stress"/>
    <property type="evidence" value="ECO:0007669"/>
    <property type="project" value="UniProtKB-ARBA"/>
</dbReference>
<dbReference type="CDD" id="cd06472">
    <property type="entry name" value="ACD_ScHsp26_like"/>
    <property type="match status" value="1"/>
</dbReference>
<dbReference type="FunFam" id="2.60.40.790:FF:000035">
    <property type="entry name" value="22.0 kDa heat shock protein"/>
    <property type="match status" value="1"/>
</dbReference>
<dbReference type="Gene3D" id="2.60.40.790">
    <property type="match status" value="1"/>
</dbReference>
<dbReference type="InterPro" id="IPR002068">
    <property type="entry name" value="A-crystallin/Hsp20_dom"/>
</dbReference>
<dbReference type="InterPro" id="IPR007052">
    <property type="entry name" value="CS_dom"/>
</dbReference>
<dbReference type="InterPro" id="IPR008978">
    <property type="entry name" value="HSP20-like_chaperone"/>
</dbReference>
<dbReference type="InterPro" id="IPR031107">
    <property type="entry name" value="Small_HSP"/>
</dbReference>
<dbReference type="PANTHER" id="PTHR11527">
    <property type="entry name" value="HEAT-SHOCK PROTEIN 20 FAMILY MEMBER"/>
    <property type="match status" value="1"/>
</dbReference>
<dbReference type="Pfam" id="PF00011">
    <property type="entry name" value="HSP20"/>
    <property type="match status" value="1"/>
</dbReference>
<dbReference type="SUPFAM" id="SSF49764">
    <property type="entry name" value="HSP20-like chaperones"/>
    <property type="match status" value="1"/>
</dbReference>
<dbReference type="PROSITE" id="PS01031">
    <property type="entry name" value="SHSP"/>
    <property type="match status" value="1"/>
</dbReference>
<protein>
    <recommendedName>
        <fullName>22.7 kDa class IV heat shock protein</fullName>
    </recommendedName>
</protein>
<proteinExistence type="evidence at transcript level"/>
<accession>P19244</accession>
<keyword id="KW-0256">Endoplasmic reticulum</keyword>
<keyword id="KW-0732">Signal</keyword>
<keyword id="KW-0346">Stress response</keyword>
<feature type="signal peptide" evidence="1">
    <location>
        <begin position="1"/>
        <end position="28"/>
    </location>
</feature>
<feature type="chain" id="PRO_0000013526" description="22.7 kDa class IV heat shock protein">
    <location>
        <begin position="29"/>
        <end position="197"/>
    </location>
</feature>
<feature type="domain" description="sHSP" evidence="2">
    <location>
        <begin position="68"/>
        <end position="184"/>
    </location>
</feature>
<feature type="short sequence motif" description="Prevents secretion from ER" evidence="1">
    <location>
        <begin position="194"/>
        <end position="197"/>
    </location>
</feature>
<organism>
    <name type="scientific">Pisum sativum</name>
    <name type="common">Garden pea</name>
    <name type="synonym">Lathyrus oleraceus</name>
    <dbReference type="NCBI Taxonomy" id="3888"/>
    <lineage>
        <taxon>Eukaryota</taxon>
        <taxon>Viridiplantae</taxon>
        <taxon>Streptophyta</taxon>
        <taxon>Embryophyta</taxon>
        <taxon>Tracheophyta</taxon>
        <taxon>Spermatophyta</taxon>
        <taxon>Magnoliopsida</taxon>
        <taxon>eudicotyledons</taxon>
        <taxon>Gunneridae</taxon>
        <taxon>Pentapetalae</taxon>
        <taxon>rosids</taxon>
        <taxon>fabids</taxon>
        <taxon>Fabales</taxon>
        <taxon>Fabaceae</taxon>
        <taxon>Papilionoideae</taxon>
        <taxon>50 kb inversion clade</taxon>
        <taxon>NPAAA clade</taxon>
        <taxon>Hologalegina</taxon>
        <taxon>IRL clade</taxon>
        <taxon>Fabeae</taxon>
        <taxon>Pisum</taxon>
    </lineage>
</organism>
<comment type="subunit">
    <text>Forms oligomeric structures.</text>
</comment>
<comment type="subcellular location">
    <subcellularLocation>
        <location evidence="3">Endoplasmic reticulum lumen</location>
    </subcellularLocation>
    <text>In the endomembrane, probably in the lumen of endoplasmic reticulum.</text>
</comment>
<comment type="similarity">
    <text evidence="2">Belongs to the small heat shock protein (HSP20) family.</text>
</comment>
<gene>
    <name type="primary">HSP22.7</name>
</gene>
<evidence type="ECO:0000255" key="1"/>
<evidence type="ECO:0000255" key="2">
    <source>
        <dbReference type="PROSITE-ProRule" id="PRU00285"/>
    </source>
</evidence>
<evidence type="ECO:0000305" key="3">
    <source>
    </source>
</evidence>
<reference key="1">
    <citation type="journal article" date="1990" name="Nucleic Acids Res.">
        <title>A cDNA clone from Pisum sativum encoding a low molecular weight heat shock protein.</title>
        <authorList>
            <person name="Lauzon L.M."/>
            <person name="Helm K.W."/>
            <person name="Vierling E."/>
        </authorList>
    </citation>
    <scope>NUCLEOTIDE SEQUENCE [MRNA]</scope>
</reference>
<reference key="2">
    <citation type="journal article" date="1993" name="Mol. Cell. Biol.">
        <title>Localization of small heat shock proteins to the higher plant endomembrane system.</title>
        <authorList>
            <person name="Helm K.W."/>
            <person name="Lafayette P.R."/>
            <person name="Nagao R.T."/>
            <person name="Key J.L."/>
            <person name="Vierling E."/>
        </authorList>
    </citation>
    <scope>SUBCELLULAR LOCATION</scope>
</reference>